<keyword id="KW-0325">Glycoprotein</keyword>
<keyword id="KW-0413">Isomerase</keyword>
<keyword id="KW-1185">Reference proteome</keyword>
<keyword id="KW-0732">Signal</keyword>
<reference key="1">
    <citation type="journal article" date="2013" name="PLoS ONE">
        <title>Genomic and secretomic analyses reveal unique features of the lignocellulolytic enzyme system of Penicillium decumbens.</title>
        <authorList>
            <person name="Liu G."/>
            <person name="Zhang L."/>
            <person name="Wei X."/>
            <person name="Zou G."/>
            <person name="Qin Y."/>
            <person name="Ma L."/>
            <person name="Li J."/>
            <person name="Zheng H."/>
            <person name="Wang S."/>
            <person name="Wang C."/>
            <person name="Xun L."/>
            <person name="Zhao G.-P."/>
            <person name="Zhou Z."/>
            <person name="Qu Y."/>
        </authorList>
    </citation>
    <scope>NUCLEOTIDE SEQUENCE [LARGE SCALE GENOMIC DNA]</scope>
    <source>
        <strain>114-2 / CGMCC 5302</strain>
    </source>
</reference>
<reference key="2">
    <citation type="journal article" date="2017" name="J. Am. Chem. Soc.">
        <title>Collaborative Biosynthesis of Maleimide- and Succinimide-Containing Natural Products by Fungal Polyketide Megasynthases.</title>
        <authorList>
            <person name="Sato M."/>
            <person name="Dander J.E."/>
            <person name="Sato C."/>
            <person name="Hung Y.S."/>
            <person name="Gao S.S."/>
            <person name="Tang M.C."/>
            <person name="Hang L."/>
            <person name="Winter J.M."/>
            <person name="Garg N.K."/>
            <person name="Watanabe K."/>
            <person name="Tang Y."/>
        </authorList>
    </citation>
    <scope>FUNCTION</scope>
    <scope>INDUCTION</scope>
    <scope>PATHWAY</scope>
</reference>
<reference key="3">
    <citation type="journal article" date="2020" name="Chem. Commun. (Camb.)">
        <title>Evidence for enzyme catalysed intramolecular [4+2] Diels-Alder cyclization during the biosynthesis of pyrichalasin H.</title>
        <authorList>
            <person name="Hantke V."/>
            <person name="Skellam E.J."/>
            <person name="Cox R.J."/>
        </authorList>
    </citation>
    <scope>FUNCTION</scope>
</reference>
<protein>
    <recommendedName>
        <fullName evidence="6">Diels-Alderase poxQ</fullName>
        <ecNumber evidence="4">5.5.1.-</ecNumber>
    </recommendedName>
    <alternativeName>
        <fullName evidence="5">Oxaleimides biosynthesis cluster protein Q</fullName>
    </alternativeName>
</protein>
<accession>S7ZEJ0</accession>
<dbReference type="EC" id="5.5.1.-" evidence="4"/>
<dbReference type="EMBL" id="KB644411">
    <property type="protein sequence ID" value="EPS29080.1"/>
    <property type="molecule type" value="Genomic_DNA"/>
</dbReference>
<dbReference type="SMR" id="S7ZEJ0"/>
<dbReference type="STRING" id="933388.S7ZEJ0"/>
<dbReference type="GlyCosmos" id="S7ZEJ0">
    <property type="glycosylation" value="3 sites, No reported glycans"/>
</dbReference>
<dbReference type="eggNOG" id="ENOG502SISX">
    <property type="taxonomic scope" value="Eukaryota"/>
</dbReference>
<dbReference type="HOGENOM" id="CLU_041924_1_0_1"/>
<dbReference type="OrthoDB" id="5344254at2759"/>
<dbReference type="PhylomeDB" id="S7ZEJ0"/>
<dbReference type="Proteomes" id="UP000019376">
    <property type="component" value="Unassembled WGS sequence"/>
</dbReference>
<dbReference type="GO" id="GO:0016853">
    <property type="term" value="F:isomerase activity"/>
    <property type="evidence" value="ECO:0007669"/>
    <property type="project" value="UniProtKB-KW"/>
</dbReference>
<dbReference type="InterPro" id="IPR054499">
    <property type="entry name" value="DA_C"/>
</dbReference>
<dbReference type="Pfam" id="PF22903">
    <property type="entry name" value="DA_C"/>
    <property type="match status" value="1"/>
</dbReference>
<dbReference type="Pfam" id="PF24137">
    <property type="entry name" value="DA_N"/>
    <property type="match status" value="1"/>
</dbReference>
<dbReference type="SUPFAM" id="SSF159245">
    <property type="entry name" value="AttH-like"/>
    <property type="match status" value="1"/>
</dbReference>
<name>POXQ_PENO1</name>
<comment type="function">
    <text evidence="3 9">Diels-Alderase; part of the gene cluster that mediates the biosynthesis of oxaleimides, cytotoxic compounds containing an unusual disubstituted succinimide moiety (PubMed:28365998). The first step of the pathway is provided by the HR-PKS poxF that serves in a new mode of collaborative biosynthesis with the PKS-NRPS poxE, by providing the olefin containing amino acid substrate via the synthesis of an ACP-bound dec-4-enoate (PubMed:28365998). The cytochrome P450 monooxygenase poxM-catalyzed oxidation at the alpha-position creates the enzyme-bound 2-hydroxydec-4-enoyl-ACP thioester, which may be prone to spontaneous hydrolysis to yield 2-hydroxydec-4-enoic acid due to increased electrophilicity of the carbonyl (PubMed:28365998). 2-hydroxydec-4-enoic acid can then be further oxidized by poxM to yield the alpha-ketoacid 2-oxodec-4-enoicacid, which is reductively aminated by the aminotransferase poxL to yield (S,E)-2-aminodec-4-enoic acid (PubMed:28365998). The Hybrid PKS-NRPS synthetase poxE then performs condensation between the octaketide product of its PKS modules and the amino group of (S,E)-2-aminodec-4-enoic acid which is activated and incorporated by the adenylation domain (PubMed:28365998). The resulting aminoacyl product can be cyclized by the Diels-Alderase PoxQ and reductively released by the reductive (R) domain of poxE to yield an aldehyde intermediate (Probable) (PubMed:28365998). The released aldehyde is then substrate for a Knoevenagel condensation by the hydrolyase poxO followed by an oxidation at the 5-position of the pyrrolidone ring (PubMed:28365998). The presence of the olefin from the amino acid building block allows for migration of the substituted allyl group to occur (PubMed:28365998). This allylic transposition reaction takes place in a conjugate addition, semipinacol-like fashion to yield a succinimide intermediate (PubMed:28365998). Iterative two-electron oxidations of the C7 methyl of the succinimide intermediate to the carboxylic acid can be catalyzed by one of two remaining cytochrome P450 monooxygenasess poxC or poxD to yield oxaleimide A (PubMed:28365998). Subsequent oxidation yields the maleimide scaffold oxaleimide I (PubMed:28365998). Both oxaleimide A and oxaleimide I can undergo oxidative modifications in the decalin ring to yield the series of products oxaleimides B to H (PubMed:28365998).</text>
</comment>
<comment type="pathway">
    <text evidence="8">Secondary metabolite biosynthesis.</text>
</comment>
<comment type="induction">
    <text evidence="3">Expression is positively regulated by the oxaleimides biosynthesis cluster-specific transcription factor poxB.</text>
</comment>
<comment type="similarity">
    <text evidence="7">Belongs to the Diels-Alderase family.</text>
</comment>
<proteinExistence type="evidence at transcript level"/>
<feature type="signal peptide" evidence="1">
    <location>
        <begin position="1"/>
        <end position="23"/>
    </location>
</feature>
<feature type="chain" id="PRO_5004547977" description="Diels-Alderase poxQ">
    <location>
        <begin position="24"/>
        <end position="443"/>
    </location>
</feature>
<feature type="glycosylation site" description="N-linked (GlcNAc...) asparagine" evidence="2">
    <location>
        <position position="78"/>
    </location>
</feature>
<feature type="glycosylation site" description="N-linked (GlcNAc...) asparagine" evidence="2">
    <location>
        <position position="97"/>
    </location>
</feature>
<feature type="glycosylation site" description="N-linked (GlcNAc...) asparagine" evidence="2">
    <location>
        <position position="145"/>
    </location>
</feature>
<gene>
    <name evidence="5" type="primary">poxQ</name>
    <name type="ORF">PDE_04029</name>
</gene>
<evidence type="ECO:0000255" key="1"/>
<evidence type="ECO:0000255" key="2">
    <source>
        <dbReference type="PROSITE-ProRule" id="PRU00498"/>
    </source>
</evidence>
<evidence type="ECO:0000269" key="3">
    <source>
    </source>
</evidence>
<evidence type="ECO:0000269" key="4">
    <source>
    </source>
</evidence>
<evidence type="ECO:0000303" key="5">
    <source>
    </source>
</evidence>
<evidence type="ECO:0000303" key="6">
    <source>
    </source>
</evidence>
<evidence type="ECO:0000305" key="7"/>
<evidence type="ECO:0000305" key="8">
    <source>
    </source>
</evidence>
<evidence type="ECO:0000305" key="9">
    <source>
    </source>
</evidence>
<sequence length="443" mass="49041">MARIPLEFLSITLPVLLLAYCLAIEYEVSLPTIAHTSPASNPEEYLQSIYEQLNLDLPSTCTVNHLSAFDNTPTSLLNFSTSPVEHFDAPKLPSGLNATAGEQWAFDGTSSSGRSGLLLGIYRDASYAFLGPGNFRLSLDLVWDNSTTWSTVDYLSSSTVHTCTDKVVGIWSHSADHYYVFTVTADAKHARIHFHTPDVVGAVDLYSTTPARYPDGALFPSEVSVTQNAPMLHWVEPIPGGLIDVDLKVKDTPFRWTGLGGHERWWSAKGWLDLMTHWEAVRLMAGPYVLSFWQPTSRVNGVAYPSAFLTKYGEKVFSAVSGKVSEVEDYILYSPVRMEKQARETGYEVELVSPAQGRRWVFGLEYRNQEFEFELGDAAGGRAYVGRAKGGEVHADDKPEEPSEGVFFIEHVDVKALTVPRAYVVVSFEFGPPIHGADIWVAC</sequence>
<organism>
    <name type="scientific">Penicillium oxalicum (strain 114-2 / CGMCC 5302)</name>
    <name type="common">Penicillium decumbens</name>
    <dbReference type="NCBI Taxonomy" id="933388"/>
    <lineage>
        <taxon>Eukaryota</taxon>
        <taxon>Fungi</taxon>
        <taxon>Dikarya</taxon>
        <taxon>Ascomycota</taxon>
        <taxon>Pezizomycotina</taxon>
        <taxon>Eurotiomycetes</taxon>
        <taxon>Eurotiomycetidae</taxon>
        <taxon>Eurotiales</taxon>
        <taxon>Aspergillaceae</taxon>
        <taxon>Penicillium</taxon>
    </lineage>
</organism>